<proteinExistence type="inferred from homology"/>
<organism>
    <name type="scientific">Escherichia coli O157:H7</name>
    <dbReference type="NCBI Taxonomy" id="83334"/>
    <lineage>
        <taxon>Bacteria</taxon>
        <taxon>Pseudomonadati</taxon>
        <taxon>Pseudomonadota</taxon>
        <taxon>Gammaproteobacteria</taxon>
        <taxon>Enterobacterales</taxon>
        <taxon>Enterobacteriaceae</taxon>
        <taxon>Escherichia</taxon>
    </lineage>
</organism>
<reference key="1">
    <citation type="journal article" date="2001" name="Nature">
        <title>Genome sequence of enterohaemorrhagic Escherichia coli O157:H7.</title>
        <authorList>
            <person name="Perna N.T."/>
            <person name="Plunkett G. III"/>
            <person name="Burland V."/>
            <person name="Mau B."/>
            <person name="Glasner J.D."/>
            <person name="Rose D.J."/>
            <person name="Mayhew G.F."/>
            <person name="Evans P.S."/>
            <person name="Gregor J."/>
            <person name="Kirkpatrick H.A."/>
            <person name="Posfai G."/>
            <person name="Hackett J."/>
            <person name="Klink S."/>
            <person name="Boutin A."/>
            <person name="Shao Y."/>
            <person name="Miller L."/>
            <person name="Grotbeck E.J."/>
            <person name="Davis N.W."/>
            <person name="Lim A."/>
            <person name="Dimalanta E.T."/>
            <person name="Potamousis K."/>
            <person name="Apodaca J."/>
            <person name="Anantharaman T.S."/>
            <person name="Lin J."/>
            <person name="Yen G."/>
            <person name="Schwartz D.C."/>
            <person name="Welch R.A."/>
            <person name="Blattner F.R."/>
        </authorList>
    </citation>
    <scope>NUCLEOTIDE SEQUENCE [LARGE SCALE GENOMIC DNA]</scope>
    <source>
        <strain>O157:H7 / EDL933 / ATCC 700927 / EHEC</strain>
    </source>
</reference>
<reference key="2">
    <citation type="journal article" date="2001" name="DNA Res.">
        <title>Complete genome sequence of enterohemorrhagic Escherichia coli O157:H7 and genomic comparison with a laboratory strain K-12.</title>
        <authorList>
            <person name="Hayashi T."/>
            <person name="Makino K."/>
            <person name="Ohnishi M."/>
            <person name="Kurokawa K."/>
            <person name="Ishii K."/>
            <person name="Yokoyama K."/>
            <person name="Han C.-G."/>
            <person name="Ohtsubo E."/>
            <person name="Nakayama K."/>
            <person name="Murata T."/>
            <person name="Tanaka M."/>
            <person name="Tobe T."/>
            <person name="Iida T."/>
            <person name="Takami H."/>
            <person name="Honda T."/>
            <person name="Sasakawa C."/>
            <person name="Ogasawara N."/>
            <person name="Yasunaga T."/>
            <person name="Kuhara S."/>
            <person name="Shiba T."/>
            <person name="Hattori M."/>
            <person name="Shinagawa H."/>
        </authorList>
    </citation>
    <scope>NUCLEOTIDE SEQUENCE [LARGE SCALE GENOMIC DNA]</scope>
    <source>
        <strain>O157:H7 / Sakai / RIMD 0509952 / EHEC</strain>
    </source>
</reference>
<accession>P0AGE2</accession>
<accession>P02339</accession>
<evidence type="ECO:0000250" key="1"/>
<evidence type="ECO:0000255" key="2">
    <source>
        <dbReference type="HAMAP-Rule" id="MF_00984"/>
    </source>
</evidence>
<evidence type="ECO:0000256" key="3">
    <source>
        <dbReference type="SAM" id="MobiDB-lite"/>
    </source>
</evidence>
<gene>
    <name type="primary">ssb</name>
    <name type="ordered locus">Z5658</name>
    <name type="ordered locus">ECs5041</name>
</gene>
<protein>
    <recommendedName>
        <fullName evidence="2">Single-stranded DNA-binding protein</fullName>
        <shortName evidence="2">SSB</shortName>
    </recommendedName>
</protein>
<name>SSB_ECO57</name>
<sequence length="178" mass="18975">MASRGVNKVILVGNLGQDPEVRYMPNGGAVANITLATSESWRDKATGEMKEQTEWHRVVLFGKLAEVASEYLRKGSQVYIEGQLRTRKWTDQSGQDRYTTEVVVNVGGTMQMLGGRQGGGAPAGGNIGGGQPQGGWGQPQQPQGGNQFSGGAQSRPQQSAPAAPSNEPPMDFDDDIPF</sequence>
<dbReference type="EMBL" id="AE005174">
    <property type="protein sequence ID" value="AAG59257.1"/>
    <property type="molecule type" value="Genomic_DNA"/>
</dbReference>
<dbReference type="EMBL" id="BA000007">
    <property type="protein sequence ID" value="BAB38464.1"/>
    <property type="molecule type" value="Genomic_DNA"/>
</dbReference>
<dbReference type="PIR" id="A91259">
    <property type="entry name" value="A91259"/>
</dbReference>
<dbReference type="BMRB" id="P0AGE2"/>
<dbReference type="SMR" id="P0AGE2"/>
<dbReference type="STRING" id="155864.Z5658"/>
<dbReference type="KEGG" id="ece:Z5658"/>
<dbReference type="KEGG" id="ecs:ECs_5041"/>
<dbReference type="PATRIC" id="fig|386585.9.peg.5264"/>
<dbReference type="eggNOG" id="COG0629">
    <property type="taxonomic scope" value="Bacteria"/>
</dbReference>
<dbReference type="HOGENOM" id="CLU_078758_0_2_6"/>
<dbReference type="OMA" id="FLRCNVW"/>
<dbReference type="Proteomes" id="UP000000558">
    <property type="component" value="Chromosome"/>
</dbReference>
<dbReference type="Proteomes" id="UP000002519">
    <property type="component" value="Chromosome"/>
</dbReference>
<dbReference type="GO" id="GO:0009295">
    <property type="term" value="C:nucleoid"/>
    <property type="evidence" value="ECO:0007669"/>
    <property type="project" value="TreeGrafter"/>
</dbReference>
<dbReference type="GO" id="GO:0003697">
    <property type="term" value="F:single-stranded DNA binding"/>
    <property type="evidence" value="ECO:0007669"/>
    <property type="project" value="UniProtKB-UniRule"/>
</dbReference>
<dbReference type="GO" id="GO:0006310">
    <property type="term" value="P:DNA recombination"/>
    <property type="evidence" value="ECO:0007669"/>
    <property type="project" value="UniProtKB-UniRule"/>
</dbReference>
<dbReference type="GO" id="GO:0006281">
    <property type="term" value="P:DNA repair"/>
    <property type="evidence" value="ECO:0007669"/>
    <property type="project" value="UniProtKB-UniRule"/>
</dbReference>
<dbReference type="GO" id="GO:0006260">
    <property type="term" value="P:DNA replication"/>
    <property type="evidence" value="ECO:0007669"/>
    <property type="project" value="UniProtKB-UniRule"/>
</dbReference>
<dbReference type="CDD" id="cd04496">
    <property type="entry name" value="SSB_OBF"/>
    <property type="match status" value="1"/>
</dbReference>
<dbReference type="DisProt" id="DP00722"/>
<dbReference type="FunFam" id="2.40.50.140:FF:000065">
    <property type="entry name" value="Single-stranded DNA-binding protein"/>
    <property type="match status" value="1"/>
</dbReference>
<dbReference type="Gene3D" id="2.40.50.140">
    <property type="entry name" value="Nucleic acid-binding proteins"/>
    <property type="match status" value="1"/>
</dbReference>
<dbReference type="HAMAP" id="MF_00984">
    <property type="entry name" value="SSB"/>
    <property type="match status" value="1"/>
</dbReference>
<dbReference type="InterPro" id="IPR012340">
    <property type="entry name" value="NA-bd_OB-fold"/>
</dbReference>
<dbReference type="InterPro" id="IPR000424">
    <property type="entry name" value="Primosome_PriB/ssb"/>
</dbReference>
<dbReference type="InterPro" id="IPR011344">
    <property type="entry name" value="ssDNA-bd"/>
</dbReference>
<dbReference type="NCBIfam" id="NF006533">
    <property type="entry name" value="PRK09010.1"/>
    <property type="match status" value="1"/>
</dbReference>
<dbReference type="NCBIfam" id="TIGR00621">
    <property type="entry name" value="ssb"/>
    <property type="match status" value="1"/>
</dbReference>
<dbReference type="PANTHER" id="PTHR10302">
    <property type="entry name" value="SINGLE-STRANDED DNA-BINDING PROTEIN"/>
    <property type="match status" value="1"/>
</dbReference>
<dbReference type="PANTHER" id="PTHR10302:SF27">
    <property type="entry name" value="SINGLE-STRANDED DNA-BINDING PROTEIN"/>
    <property type="match status" value="1"/>
</dbReference>
<dbReference type="Pfam" id="PF00436">
    <property type="entry name" value="SSB"/>
    <property type="match status" value="1"/>
</dbReference>
<dbReference type="PIRSF" id="PIRSF002070">
    <property type="entry name" value="SSB"/>
    <property type="match status" value="1"/>
</dbReference>
<dbReference type="SUPFAM" id="SSF50249">
    <property type="entry name" value="Nucleic acid-binding proteins"/>
    <property type="match status" value="1"/>
</dbReference>
<dbReference type="PROSITE" id="PS50935">
    <property type="entry name" value="SSB"/>
    <property type="match status" value="1"/>
</dbReference>
<keyword id="KW-0227">DNA damage</keyword>
<keyword id="KW-0233">DNA recombination</keyword>
<keyword id="KW-0234">DNA repair</keyword>
<keyword id="KW-0235">DNA replication</keyword>
<keyword id="KW-0238">DNA-binding</keyword>
<keyword id="KW-1185">Reference proteome</keyword>
<comment type="function">
    <text evidence="2">Plays an important role in DNA replication, recombination and repair. Binds to ssDNA and to an array of partner proteins to recruit them to their sites of action during DNA metabolism.</text>
</comment>
<comment type="subunit">
    <text evidence="2">Homotetramer.</text>
</comment>
<feature type="initiator methionine" description="Removed" evidence="1">
    <location>
        <position position="1"/>
    </location>
</feature>
<feature type="chain" id="PRO_0000096037" description="Single-stranded DNA-binding protein">
    <location>
        <begin position="2"/>
        <end position="178"/>
    </location>
</feature>
<feature type="domain" description="SSB" evidence="2">
    <location>
        <begin position="6"/>
        <end position="111"/>
    </location>
</feature>
<feature type="DNA-binding region" evidence="2">
    <location>
        <begin position="55"/>
        <end position="61"/>
    </location>
</feature>
<feature type="region of interest" description="Disordered" evidence="3">
    <location>
        <begin position="113"/>
        <end position="178"/>
    </location>
</feature>
<feature type="short sequence motif" description="Important for interaction with partner proteins" evidence="2">
    <location>
        <begin position="173"/>
        <end position="178"/>
    </location>
</feature>
<feature type="compositionally biased region" description="Gly residues" evidence="3">
    <location>
        <begin position="115"/>
        <end position="137"/>
    </location>
</feature>
<feature type="compositionally biased region" description="Low complexity" evidence="3">
    <location>
        <begin position="138"/>
        <end position="165"/>
    </location>
</feature>